<proteinExistence type="inferred from homology"/>
<organism>
    <name type="scientific">Streptococcus agalactiae serotype III (strain NEM316)</name>
    <dbReference type="NCBI Taxonomy" id="211110"/>
    <lineage>
        <taxon>Bacteria</taxon>
        <taxon>Bacillati</taxon>
        <taxon>Bacillota</taxon>
        <taxon>Bacilli</taxon>
        <taxon>Lactobacillales</taxon>
        <taxon>Streptococcaceae</taxon>
        <taxon>Streptococcus</taxon>
    </lineage>
</organism>
<name>RF3_STRA3</name>
<evidence type="ECO:0000255" key="1">
    <source>
        <dbReference type="HAMAP-Rule" id="MF_00072"/>
    </source>
</evidence>
<keyword id="KW-0963">Cytoplasm</keyword>
<keyword id="KW-0342">GTP-binding</keyword>
<keyword id="KW-0547">Nucleotide-binding</keyword>
<keyword id="KW-0648">Protein biosynthesis</keyword>
<sequence>MTLQDEIKKRRTFAIISHPDAGKTTITEQLLYFGGEIREAGTVKGKKSGTFAKSDWMDIEKQRGISVTSSVMQFDYAGKRVNILDTPGHEDFSEDTYRTLMAVDAAVMVVDSAKGIEAQTKKLFEVVKHRNIPVFTFINKLDRDGREPLDLLEELEEVLGIASYPMNWPIGMGKSFEGLYDLHNKRLELYKGDERFASIEDGDQLFANNPFYEQVKEDIELLQEAGNDFSEQAILDGDLTPVFFGSALTNFGVQTFLDTFLEFAPEPHGHKTTEGNVIDPLAKDFSGFVFKIQANMDPRHRDRIAFVRIVSGEFERGMGVNLTRTGKGAKLSNVTQFMAESRENVTNAVAGDIIGVYDTGTYQVGDTLTVGKNKFEFEPLPTFTPELFMKVSAKNVMKQKSFHKGIEQLVQEGAIQLYKNYQTGEYMLGAVGQLQFEVFKHRMEGEYNAEVVMTPMGKKTVRWINSDDLDERMSSSRNILAKDRFDQPVFLFENDFALRWFADKYPDVKLEEKM</sequence>
<accession>Q8E635</accession>
<protein>
    <recommendedName>
        <fullName evidence="1">Peptide chain release factor 3</fullName>
        <shortName evidence="1">RF-3</shortName>
    </recommendedName>
</protein>
<comment type="function">
    <text evidence="1">Increases the formation of ribosomal termination complexes and stimulates activities of RF-1 and RF-2. It binds guanine nucleotides and has strong preference for UGA stop codons. It may interact directly with the ribosome. The stimulation of RF-1 and RF-2 is significantly reduced by GTP and GDP, but not by GMP.</text>
</comment>
<comment type="subcellular location">
    <subcellularLocation>
        <location evidence="1">Cytoplasm</location>
    </subcellularLocation>
</comment>
<comment type="similarity">
    <text evidence="1">Belongs to the TRAFAC class translation factor GTPase superfamily. Classic translation factor GTPase family. PrfC subfamily.</text>
</comment>
<reference key="1">
    <citation type="journal article" date="2002" name="Mol. Microbiol.">
        <title>Genome sequence of Streptococcus agalactiae, a pathogen causing invasive neonatal disease.</title>
        <authorList>
            <person name="Glaser P."/>
            <person name="Rusniok C."/>
            <person name="Buchrieser C."/>
            <person name="Chevalier F."/>
            <person name="Frangeul L."/>
            <person name="Msadek T."/>
            <person name="Zouine M."/>
            <person name="Couve E."/>
            <person name="Lalioui L."/>
            <person name="Poyart C."/>
            <person name="Trieu-Cuot P."/>
            <person name="Kunst F."/>
        </authorList>
    </citation>
    <scope>NUCLEOTIDE SEQUENCE [LARGE SCALE GENOMIC DNA]</scope>
    <source>
        <strain>NEM316</strain>
    </source>
</reference>
<feature type="chain" id="PRO_0000210969" description="Peptide chain release factor 3">
    <location>
        <begin position="1"/>
        <end position="514"/>
    </location>
</feature>
<feature type="domain" description="tr-type G">
    <location>
        <begin position="8"/>
        <end position="268"/>
    </location>
</feature>
<feature type="binding site" evidence="1">
    <location>
        <begin position="17"/>
        <end position="24"/>
    </location>
    <ligand>
        <name>GTP</name>
        <dbReference type="ChEBI" id="CHEBI:37565"/>
    </ligand>
</feature>
<feature type="binding site" evidence="1">
    <location>
        <begin position="85"/>
        <end position="89"/>
    </location>
    <ligand>
        <name>GTP</name>
        <dbReference type="ChEBI" id="CHEBI:37565"/>
    </ligand>
</feature>
<feature type="binding site" evidence="1">
    <location>
        <begin position="139"/>
        <end position="142"/>
    </location>
    <ligand>
        <name>GTP</name>
        <dbReference type="ChEBI" id="CHEBI:37565"/>
    </ligand>
</feature>
<gene>
    <name evidence="1" type="primary">prfC</name>
    <name type="ordered locus">gbs0792</name>
</gene>
<dbReference type="EMBL" id="AL766847">
    <property type="protein sequence ID" value="CAD46436.1"/>
    <property type="molecule type" value="Genomic_DNA"/>
</dbReference>
<dbReference type="RefSeq" id="WP_000174832.1">
    <property type="nucleotide sequence ID" value="NC_004368.1"/>
</dbReference>
<dbReference type="SMR" id="Q8E635"/>
<dbReference type="KEGG" id="san:gbs0792"/>
<dbReference type="eggNOG" id="COG4108">
    <property type="taxonomic scope" value="Bacteria"/>
</dbReference>
<dbReference type="HOGENOM" id="CLU_002794_2_1_9"/>
<dbReference type="Proteomes" id="UP000000823">
    <property type="component" value="Chromosome"/>
</dbReference>
<dbReference type="GO" id="GO:0005829">
    <property type="term" value="C:cytosol"/>
    <property type="evidence" value="ECO:0007669"/>
    <property type="project" value="TreeGrafter"/>
</dbReference>
<dbReference type="GO" id="GO:0005525">
    <property type="term" value="F:GTP binding"/>
    <property type="evidence" value="ECO:0007669"/>
    <property type="project" value="UniProtKB-UniRule"/>
</dbReference>
<dbReference type="GO" id="GO:0003924">
    <property type="term" value="F:GTPase activity"/>
    <property type="evidence" value="ECO:0007669"/>
    <property type="project" value="InterPro"/>
</dbReference>
<dbReference type="GO" id="GO:0016150">
    <property type="term" value="F:translation release factor activity, codon nonspecific"/>
    <property type="evidence" value="ECO:0007669"/>
    <property type="project" value="TreeGrafter"/>
</dbReference>
<dbReference type="GO" id="GO:0016149">
    <property type="term" value="F:translation release factor activity, codon specific"/>
    <property type="evidence" value="ECO:0007669"/>
    <property type="project" value="UniProtKB-UniRule"/>
</dbReference>
<dbReference type="GO" id="GO:0006449">
    <property type="term" value="P:regulation of translational termination"/>
    <property type="evidence" value="ECO:0007669"/>
    <property type="project" value="UniProtKB-UniRule"/>
</dbReference>
<dbReference type="CDD" id="cd04169">
    <property type="entry name" value="RF3"/>
    <property type="match status" value="1"/>
</dbReference>
<dbReference type="CDD" id="cd16259">
    <property type="entry name" value="RF3_III"/>
    <property type="match status" value="1"/>
</dbReference>
<dbReference type="FunFam" id="2.40.30.10:FF:000040">
    <property type="entry name" value="Peptide chain release factor 3"/>
    <property type="match status" value="1"/>
</dbReference>
<dbReference type="FunFam" id="3.30.70.3280:FF:000001">
    <property type="entry name" value="Peptide chain release factor 3"/>
    <property type="match status" value="1"/>
</dbReference>
<dbReference type="FunFam" id="3.40.50.300:FF:000542">
    <property type="entry name" value="Peptide chain release factor 3"/>
    <property type="match status" value="1"/>
</dbReference>
<dbReference type="Gene3D" id="3.40.50.300">
    <property type="entry name" value="P-loop containing nucleotide triphosphate hydrolases"/>
    <property type="match status" value="1"/>
</dbReference>
<dbReference type="Gene3D" id="3.30.70.3280">
    <property type="entry name" value="Peptide chain release factor 3, domain III"/>
    <property type="match status" value="1"/>
</dbReference>
<dbReference type="Gene3D" id="2.40.30.10">
    <property type="entry name" value="Translation factors"/>
    <property type="match status" value="1"/>
</dbReference>
<dbReference type="HAMAP" id="MF_00072">
    <property type="entry name" value="Rel_fac_3"/>
    <property type="match status" value="1"/>
</dbReference>
<dbReference type="InterPro" id="IPR053905">
    <property type="entry name" value="EF-G-like_DII"/>
</dbReference>
<dbReference type="InterPro" id="IPR035647">
    <property type="entry name" value="EFG_III/V"/>
</dbReference>
<dbReference type="InterPro" id="IPR031157">
    <property type="entry name" value="G_TR_CS"/>
</dbReference>
<dbReference type="InterPro" id="IPR027417">
    <property type="entry name" value="P-loop_NTPase"/>
</dbReference>
<dbReference type="InterPro" id="IPR004548">
    <property type="entry name" value="PrfC"/>
</dbReference>
<dbReference type="InterPro" id="IPR032090">
    <property type="entry name" value="RF3_C"/>
</dbReference>
<dbReference type="InterPro" id="IPR038467">
    <property type="entry name" value="RF3_dom_3_sf"/>
</dbReference>
<dbReference type="InterPro" id="IPR041732">
    <property type="entry name" value="RF3_GTP-bd"/>
</dbReference>
<dbReference type="InterPro" id="IPR005225">
    <property type="entry name" value="Small_GTP-bd"/>
</dbReference>
<dbReference type="InterPro" id="IPR000795">
    <property type="entry name" value="T_Tr_GTP-bd_dom"/>
</dbReference>
<dbReference type="InterPro" id="IPR009000">
    <property type="entry name" value="Transl_B-barrel_sf"/>
</dbReference>
<dbReference type="NCBIfam" id="TIGR00503">
    <property type="entry name" value="prfC"/>
    <property type="match status" value="1"/>
</dbReference>
<dbReference type="NCBIfam" id="NF001964">
    <property type="entry name" value="PRK00741.1"/>
    <property type="match status" value="1"/>
</dbReference>
<dbReference type="NCBIfam" id="TIGR00231">
    <property type="entry name" value="small_GTP"/>
    <property type="match status" value="1"/>
</dbReference>
<dbReference type="PANTHER" id="PTHR43556">
    <property type="entry name" value="PEPTIDE CHAIN RELEASE FACTOR RF3"/>
    <property type="match status" value="1"/>
</dbReference>
<dbReference type="PANTHER" id="PTHR43556:SF2">
    <property type="entry name" value="PEPTIDE CHAIN RELEASE FACTOR RF3"/>
    <property type="match status" value="1"/>
</dbReference>
<dbReference type="Pfam" id="PF22042">
    <property type="entry name" value="EF-G_D2"/>
    <property type="match status" value="1"/>
</dbReference>
<dbReference type="Pfam" id="PF00009">
    <property type="entry name" value="GTP_EFTU"/>
    <property type="match status" value="1"/>
</dbReference>
<dbReference type="Pfam" id="PF16658">
    <property type="entry name" value="RF3_C"/>
    <property type="match status" value="1"/>
</dbReference>
<dbReference type="PRINTS" id="PR00315">
    <property type="entry name" value="ELONGATNFCT"/>
</dbReference>
<dbReference type="PRINTS" id="PR01037">
    <property type="entry name" value="TCRTETOQM"/>
</dbReference>
<dbReference type="SUPFAM" id="SSF54980">
    <property type="entry name" value="EF-G C-terminal domain-like"/>
    <property type="match status" value="1"/>
</dbReference>
<dbReference type="SUPFAM" id="SSF52540">
    <property type="entry name" value="P-loop containing nucleoside triphosphate hydrolases"/>
    <property type="match status" value="1"/>
</dbReference>
<dbReference type="SUPFAM" id="SSF50447">
    <property type="entry name" value="Translation proteins"/>
    <property type="match status" value="1"/>
</dbReference>
<dbReference type="PROSITE" id="PS00301">
    <property type="entry name" value="G_TR_1"/>
    <property type="match status" value="1"/>
</dbReference>
<dbReference type="PROSITE" id="PS51722">
    <property type="entry name" value="G_TR_2"/>
    <property type="match status" value="1"/>
</dbReference>